<sequence>MARSVGIDLGTTNSCVAVLEGGEPTVIPNAEGARTTPSVVAFTNSGETLVGEVAKRQAVTNVDRTVRSVKRHMGEAWTMGVDDKTYKPQQISAFILQKLKRDAEAYLGEPVTNAVITVPAYFSDAQRQATKEAGEIAGLAVDRIVNEPTAAALAYGLDKTDKDQTVLVFDLGGGTFDVSLLDISDGVFEVKATNGDNHLGGDDWDQRIVDWLVTQFKNANGIDLAADKMAKQRLQEAAERAKIELSQASETHINLPYITAGAAGPLHLDEKLTRAEFQRMTSDLLERCRTPFNAVMKDAGLNVSQIDEVILVGGSTRMPAVAELVKELAGKDPHKGVNPDEVVALGASLQAGVLKGEVKDVLLLDVTPLSLGIETKGGVMTKIIERNTTIPTKRSEVFTTAEDNQPSVMIQVFQGEREFVRDNKSLGNFELTGLMPAPRGIPQIEVSFDIDANGIVHVHAKDMATGKEQSMTVTGGSALGKDEIDRMVKEAEANAEADKKRREAVEMRNEADALAFRTEKLLDENSDKIPEDTKTPVTEAIATLKETLKGTDNDDEVKAAMDDLNQKASAMGQAIYAAAQQAQAENPQGQDAESASSESGDDTVVDAEIVDDEDEKK</sequence>
<proteinExistence type="inferred from homology"/>
<gene>
    <name type="primary">dnaK</name>
</gene>
<dbReference type="EMBL" id="AF222062">
    <property type="protein sequence ID" value="AAF33789.1"/>
    <property type="molecule type" value="Genomic_DNA"/>
</dbReference>
<dbReference type="RefSeq" id="WP_002514483.1">
    <property type="nucleotide sequence ID" value="NZ_WQNV01000003.1"/>
</dbReference>
<dbReference type="SMR" id="P0CY98"/>
<dbReference type="GeneID" id="92857987"/>
<dbReference type="PATRIC" id="fig|1747.45.peg.539"/>
<dbReference type="OMA" id="MGTDWKI"/>
<dbReference type="OrthoDB" id="9766019at2"/>
<dbReference type="GO" id="GO:0005524">
    <property type="term" value="F:ATP binding"/>
    <property type="evidence" value="ECO:0007669"/>
    <property type="project" value="UniProtKB-UniRule"/>
</dbReference>
<dbReference type="GO" id="GO:0140662">
    <property type="term" value="F:ATP-dependent protein folding chaperone"/>
    <property type="evidence" value="ECO:0007669"/>
    <property type="project" value="InterPro"/>
</dbReference>
<dbReference type="GO" id="GO:0051082">
    <property type="term" value="F:unfolded protein binding"/>
    <property type="evidence" value="ECO:0007669"/>
    <property type="project" value="InterPro"/>
</dbReference>
<dbReference type="CDD" id="cd10234">
    <property type="entry name" value="ASKHA_NBD_HSP70_DnaK-like"/>
    <property type="match status" value="1"/>
</dbReference>
<dbReference type="FunFam" id="2.60.34.10:FF:000014">
    <property type="entry name" value="Chaperone protein DnaK HSP70"/>
    <property type="match status" value="1"/>
</dbReference>
<dbReference type="FunFam" id="1.20.1270.10:FF:000001">
    <property type="entry name" value="Molecular chaperone DnaK"/>
    <property type="match status" value="1"/>
</dbReference>
<dbReference type="FunFam" id="3.30.420.40:FF:000071">
    <property type="entry name" value="Molecular chaperone DnaK"/>
    <property type="match status" value="1"/>
</dbReference>
<dbReference type="FunFam" id="3.90.640.10:FF:000003">
    <property type="entry name" value="Molecular chaperone DnaK"/>
    <property type="match status" value="1"/>
</dbReference>
<dbReference type="Gene3D" id="1.20.1270.10">
    <property type="match status" value="1"/>
</dbReference>
<dbReference type="Gene3D" id="3.30.420.40">
    <property type="match status" value="2"/>
</dbReference>
<dbReference type="Gene3D" id="3.90.640.10">
    <property type="entry name" value="Actin, Chain A, domain 4"/>
    <property type="match status" value="1"/>
</dbReference>
<dbReference type="Gene3D" id="2.60.34.10">
    <property type="entry name" value="Substrate Binding Domain Of DNAk, Chain A, domain 1"/>
    <property type="match status" value="1"/>
</dbReference>
<dbReference type="HAMAP" id="MF_00332">
    <property type="entry name" value="DnaK"/>
    <property type="match status" value="1"/>
</dbReference>
<dbReference type="InterPro" id="IPR043129">
    <property type="entry name" value="ATPase_NBD"/>
</dbReference>
<dbReference type="InterPro" id="IPR012725">
    <property type="entry name" value="Chaperone_DnaK"/>
</dbReference>
<dbReference type="InterPro" id="IPR018181">
    <property type="entry name" value="Heat_shock_70_CS"/>
</dbReference>
<dbReference type="InterPro" id="IPR029048">
    <property type="entry name" value="HSP70_C_sf"/>
</dbReference>
<dbReference type="InterPro" id="IPR029047">
    <property type="entry name" value="HSP70_peptide-bd_sf"/>
</dbReference>
<dbReference type="InterPro" id="IPR013126">
    <property type="entry name" value="Hsp_70_fam"/>
</dbReference>
<dbReference type="NCBIfam" id="NF001413">
    <property type="entry name" value="PRK00290.1"/>
    <property type="match status" value="1"/>
</dbReference>
<dbReference type="NCBIfam" id="TIGR02350">
    <property type="entry name" value="prok_dnaK"/>
    <property type="match status" value="1"/>
</dbReference>
<dbReference type="PANTHER" id="PTHR19375">
    <property type="entry name" value="HEAT SHOCK PROTEIN 70KDA"/>
    <property type="match status" value="1"/>
</dbReference>
<dbReference type="Pfam" id="PF00012">
    <property type="entry name" value="HSP70"/>
    <property type="match status" value="2"/>
</dbReference>
<dbReference type="PRINTS" id="PR00301">
    <property type="entry name" value="HEATSHOCK70"/>
</dbReference>
<dbReference type="SUPFAM" id="SSF53067">
    <property type="entry name" value="Actin-like ATPase domain"/>
    <property type="match status" value="2"/>
</dbReference>
<dbReference type="SUPFAM" id="SSF100920">
    <property type="entry name" value="Heat shock protein 70kD (HSP70), peptide-binding domain"/>
    <property type="match status" value="1"/>
</dbReference>
<dbReference type="PROSITE" id="PS00297">
    <property type="entry name" value="HSP70_1"/>
    <property type="match status" value="1"/>
</dbReference>
<dbReference type="PROSITE" id="PS00329">
    <property type="entry name" value="HSP70_2"/>
    <property type="match status" value="1"/>
</dbReference>
<dbReference type="PROSITE" id="PS01036">
    <property type="entry name" value="HSP70_3"/>
    <property type="match status" value="1"/>
</dbReference>
<reference key="1">
    <citation type="submission" date="2000-01" db="EMBL/GenBank/DDBJ databases">
        <title>Cloning and sequencing of a dnaK homolog from Propionibacterium acnes.</title>
        <authorList>
            <person name="Farrar M.D."/>
            <person name="Ingham E."/>
            <person name="Holland K.T."/>
        </authorList>
    </citation>
    <scope>NUCLEOTIDE SEQUENCE [GENOMIC DNA]</scope>
    <source>
        <strain>P37</strain>
    </source>
</reference>
<protein>
    <recommendedName>
        <fullName>Chaperone protein DnaK</fullName>
    </recommendedName>
    <alternativeName>
        <fullName>HSP70</fullName>
    </alternativeName>
    <alternativeName>
        <fullName>Heat shock 70 kDa protein</fullName>
    </alternativeName>
    <alternativeName>
        <fullName>Heat shock protein 70</fullName>
    </alternativeName>
</protein>
<organism>
    <name type="scientific">Cutibacterium acnes</name>
    <name type="common">Propionibacterium acnes</name>
    <dbReference type="NCBI Taxonomy" id="1747"/>
    <lineage>
        <taxon>Bacteria</taxon>
        <taxon>Bacillati</taxon>
        <taxon>Actinomycetota</taxon>
        <taxon>Actinomycetes</taxon>
        <taxon>Propionibacteriales</taxon>
        <taxon>Propionibacteriaceae</taxon>
        <taxon>Cutibacterium</taxon>
    </lineage>
</organism>
<evidence type="ECO:0000250" key="1"/>
<evidence type="ECO:0000256" key="2">
    <source>
        <dbReference type="SAM" id="MobiDB-lite"/>
    </source>
</evidence>
<evidence type="ECO:0000305" key="3"/>
<name>DNAK_CUTAC</name>
<keyword id="KW-0067">ATP-binding</keyword>
<keyword id="KW-0143">Chaperone</keyword>
<keyword id="KW-0547">Nucleotide-binding</keyword>
<keyword id="KW-0597">Phosphoprotein</keyword>
<keyword id="KW-0346">Stress response</keyword>
<feature type="chain" id="PRO_0000410485" description="Chaperone protein DnaK">
    <location>
        <begin position="1"/>
        <end position="617"/>
    </location>
</feature>
<feature type="region of interest" description="Disordered" evidence="2">
    <location>
        <begin position="578"/>
        <end position="617"/>
    </location>
</feature>
<feature type="compositionally biased region" description="Low complexity" evidence="2">
    <location>
        <begin position="578"/>
        <end position="598"/>
    </location>
</feature>
<feature type="compositionally biased region" description="Acidic residues" evidence="2">
    <location>
        <begin position="599"/>
        <end position="617"/>
    </location>
</feature>
<feature type="modified residue" description="Phosphothreonine; by autocatalysis" evidence="1">
    <location>
        <position position="175"/>
    </location>
</feature>
<comment type="function">
    <text evidence="1">Acts as a chaperone.</text>
</comment>
<comment type="induction">
    <text evidence="1">By stress conditions e.g. heat shock (By similarity).</text>
</comment>
<comment type="similarity">
    <text evidence="3">Belongs to the heat shock protein 70 family.</text>
</comment>
<accession>P0CY98</accession>
<accession>Q9L7P1</accession>